<comment type="function">
    <text evidence="2">Essential component of the SCF (SKP1-CUL1-F-box protein) ubiquitin ligase complex, which mediates the ubiquitination of proteins involved in cell cycle progression, signal transduction and transcription. In the SCF complex, serves as an adapter that links the F-box protein to CUL1. The functional specificity of the SCF complex depends on the F-box protein as substrate recognition component. SCF(BTRC) and SCF(FBXW11) direct ubiquitination of CTNNB1 and participate in Wnt signaling. SCF(FBXW11) directs ubiquitination of phosphorylated NFKBIA. SCF(BTRC) directs ubiquitination of NFKBIB, NFKBIE, ATF4, SMAD3, SMAD4, CDC25A, FBXO5, CEP68 and probably NFKB2. SCF(SKP2) directs ubiquitination of phosphorylated CDKN1B/p27kip and is involved in regulation of G1/S transition. SCF(SKP2) directs ubiquitination of ORC1, CDT1, RBL2, ELF4, CDKN1A, RAG2, FOXO1A, and probably MYC and TAL1. SCF(FBXW7) directs ubiquitination of cyclin E, NOTCH1 released notch intracellular domain (NICD), and probably PSEN1. SCF(FBXW2) directs ubiquitination of GCM1. SCF(FBXO32) directs ubiquitination of MYOD1. SCF(FBXO7) directs ubiquitination of BIRC2 and DLGAP5. SCF(FBXO33) directs ubiquitination of YBX1. SCF(FBXO11) directs ubiquitination of BCL6 and DTL but does not seem to direct ubiquitination of TP53. SCF(BTRC) mediates the ubiquitination of NFKBIA at 'Lys-21' and 'Lys-22'; the degradation frees the associated NFKB1-RELA dimer to translocate into the nucleus and to activate transcription. SCF(CCNF) directs ubiquitination of CCP110. SCF(FBXL3) and SCF(FBXL21) direct ubiquitination of CRY1 and CRY2. SCF(FBXO9) directs ubiquitination of TTI1 and TELO2. SCF(FBXO10) direct ubiquitination of BCL2. Core component of the Cul7-RING(FBXW8) ubiquitin ligase complex, which mediates the ubiquitination and subsequent proteasomal degradation of target proteins (By similarity).</text>
</comment>
<comment type="pathway">
    <text>Protein modification; protein ubiquitination.</text>
</comment>
<comment type="subunit">
    <text evidence="2 3">Interacts with KDM2B, forming heterodimers (By similarity). The KDM2B-SKP1 heterodimeric complex interacts with the PCGF1-BCORL heterodimeric complex to form a homotetrameric polycomb repression complex 1 (PRC1.1) (By similarity). Component of multiple SCF (SKP1-CUL1-F-box) E3 ubiquitin-protein ligase complexes formed of CUL1, SKP1, RBX1 and a variable F-box domain-containing protein as substrate-specific subunit. Component of the SCF(FBXW11) complex containing FBXW11. Component of the SCF(SKP2) complex containing SKP2, in which it interacts directly with SKP1, SKP2 and RBX1. Component of the SCF(FBXW2) complex containing FBXW2. Component of the SCF(FBXO32) complex containing FBXO32. Component of the probable SCF(FBXO7) complex containing FBXO7. Component of the SCF(FBXO10) complex containing FBXO10. Component of the SCF(FBXO11) complex containing FBXO11. Component of the SCF(FBXO25) complex containing FBXO25. Component of the SCF(FBXO33) complex containing FBXO33. Component of the probable SCF(FBXO4) complex containing FBXO4. Component of the SCF(FBXO44) complex, composed of SKP1, CUL1 and FBXO44. Component of the SCF(BTRC) complex, composed of SKP1, CUL1 and BTRC. This complex binds phosphorylated NFKBIA. Part of a SCF complex consisting of CUL1, RBX1, SKP1 and FBXO2. Component of a SCF(SKP2)-like complex containing CUL1, SKP1, TRIM21 and SKP2. Component of the SCF(FBXO17) complex, composed of SKP1, CUL1 and FBXO17. Component of the SCF(FBXO27) complex, composed of SKP1, CUL1 and FBXO27. Component of the SCF(CCNF) complex consisting of CUL1, RBX1, SKP1 and CCNF. Component of the SCF(FBXL3) complex composed of CUL1, SKP1, RBX1 and FBXL3. Component of the SCF(FBXL21) complex composed of CUL1, SKP1, RBX1 and FBXL21. Component of the SCF(FBXO9) composed of CUL1, SKP1, RBX1 and FBXO9. Component of the SCF(FBXW7) composed of CUL1, SKP1, RBX1 and FBXW7. Interacts with CEP68 (By similarity). Interacts with NOTCH2 and FBXW15 (By similarity). The SKP1-KDM2A and SKP1-KDM2B complexes interact with UBB (By similarity). Component of the Cul7-RING(FBXW8) complex consisting of CUL7, RBX1, SKP1 and FBXW8; within the complex interacts with FBXW8 (By similarity).</text>
</comment>
<comment type="similarity">
    <text evidence="5">Belongs to the SKP1 family.</text>
</comment>
<evidence type="ECO:0000250" key="1"/>
<evidence type="ECO:0000250" key="2">
    <source>
        <dbReference type="UniProtKB" id="P63208"/>
    </source>
</evidence>
<evidence type="ECO:0000250" key="3">
    <source>
        <dbReference type="UniProtKB" id="Q9WTX5"/>
    </source>
</evidence>
<evidence type="ECO:0000256" key="4">
    <source>
        <dbReference type="SAM" id="MobiDB-lite"/>
    </source>
</evidence>
<evidence type="ECO:0000305" key="5"/>
<gene>
    <name type="primary">SKP1</name>
    <name type="synonym">SKP1A</name>
    <name type="ORF">RCJMB04_11c19</name>
</gene>
<accession>Q5ZKF5</accession>
<reference key="1">
    <citation type="journal article" date="2005" name="Genome Biol.">
        <title>Full-length cDNAs from chicken bursal lymphocytes to facilitate gene function analysis.</title>
        <authorList>
            <person name="Caldwell R.B."/>
            <person name="Kierzek A.M."/>
            <person name="Arakawa H."/>
            <person name="Bezzubov Y."/>
            <person name="Zaim J."/>
            <person name="Fiedler P."/>
            <person name="Kutter S."/>
            <person name="Blagodatski A."/>
            <person name="Kostovska D."/>
            <person name="Koter M."/>
            <person name="Plachy J."/>
            <person name="Carninci P."/>
            <person name="Hayashizaki Y."/>
            <person name="Buerstedde J.-M."/>
        </authorList>
    </citation>
    <scope>NUCLEOTIDE SEQUENCE [LARGE SCALE MRNA]</scope>
    <source>
        <strain>CB</strain>
        <tissue>Bursa of Fabricius</tissue>
    </source>
</reference>
<organism>
    <name type="scientific">Gallus gallus</name>
    <name type="common">Chicken</name>
    <dbReference type="NCBI Taxonomy" id="9031"/>
    <lineage>
        <taxon>Eukaryota</taxon>
        <taxon>Metazoa</taxon>
        <taxon>Chordata</taxon>
        <taxon>Craniata</taxon>
        <taxon>Vertebrata</taxon>
        <taxon>Euteleostomi</taxon>
        <taxon>Archelosauria</taxon>
        <taxon>Archosauria</taxon>
        <taxon>Dinosauria</taxon>
        <taxon>Saurischia</taxon>
        <taxon>Theropoda</taxon>
        <taxon>Coelurosauria</taxon>
        <taxon>Aves</taxon>
        <taxon>Neognathae</taxon>
        <taxon>Galloanserae</taxon>
        <taxon>Galliformes</taxon>
        <taxon>Phasianidae</taxon>
        <taxon>Phasianinae</taxon>
        <taxon>Gallus</taxon>
    </lineage>
</organism>
<proteinExistence type="evidence at transcript level"/>
<dbReference type="EMBL" id="AJ720129">
    <property type="protein sequence ID" value="CAG31788.1"/>
    <property type="molecule type" value="mRNA"/>
</dbReference>
<dbReference type="RefSeq" id="NP_001006153.1">
    <property type="nucleotide sequence ID" value="NM_001006153.2"/>
</dbReference>
<dbReference type="RefSeq" id="XP_025010624.1">
    <property type="nucleotide sequence ID" value="XM_025154856.3"/>
</dbReference>
<dbReference type="RefSeq" id="XP_040502854.1">
    <property type="nucleotide sequence ID" value="XM_040646920.2"/>
</dbReference>
<dbReference type="RefSeq" id="XP_040502855.1">
    <property type="nucleotide sequence ID" value="XM_040646921.2"/>
</dbReference>
<dbReference type="RefSeq" id="XP_046782961.1">
    <property type="nucleotide sequence ID" value="XM_046927005.1"/>
</dbReference>
<dbReference type="SMR" id="Q5ZKF5"/>
<dbReference type="BioGRID" id="677840">
    <property type="interactions" value="1"/>
</dbReference>
<dbReference type="FunCoup" id="Q5ZKF5">
    <property type="interactions" value="3029"/>
</dbReference>
<dbReference type="STRING" id="9031.ENSGALP00000010447"/>
<dbReference type="PaxDb" id="9031-ENSGALP00000010447"/>
<dbReference type="GeneID" id="416319"/>
<dbReference type="KEGG" id="gga:416319"/>
<dbReference type="CTD" id="6500"/>
<dbReference type="VEuPathDB" id="HostDB:geneid_416319"/>
<dbReference type="eggNOG" id="KOG1724">
    <property type="taxonomic scope" value="Eukaryota"/>
</dbReference>
<dbReference type="HOGENOM" id="CLU_059252_7_0_1"/>
<dbReference type="InParanoid" id="Q5ZKF5"/>
<dbReference type="OMA" id="DKYTASM"/>
<dbReference type="OrthoDB" id="2342932at2759"/>
<dbReference type="PhylomeDB" id="Q5ZKF5"/>
<dbReference type="TreeFam" id="TF354233"/>
<dbReference type="Reactome" id="R-GGA-1169091">
    <property type="pathway name" value="Activation of NF-kappaB in B cells"/>
</dbReference>
<dbReference type="Reactome" id="R-GGA-1170546">
    <property type="pathway name" value="Prolactin receptor signaling"/>
</dbReference>
<dbReference type="Reactome" id="R-GGA-174113">
    <property type="pathway name" value="SCF-beta-TrCP mediated degradation of Emi1"/>
</dbReference>
<dbReference type="Reactome" id="R-GGA-187577">
    <property type="pathway name" value="SCF(Skp2)-mediated degradation of p27/p21"/>
</dbReference>
<dbReference type="Reactome" id="R-GGA-195253">
    <property type="pathway name" value="Degradation of beta-catenin by the destruction complex"/>
</dbReference>
<dbReference type="Reactome" id="R-GGA-202424">
    <property type="pathway name" value="Downstream TCR signaling"/>
</dbReference>
<dbReference type="Reactome" id="R-GGA-2565942">
    <property type="pathway name" value="Regulation of PLK1 Activity at G2/M Transition"/>
</dbReference>
<dbReference type="Reactome" id="R-GGA-2871837">
    <property type="pathway name" value="FCERI mediated NF-kB activation"/>
</dbReference>
<dbReference type="Reactome" id="R-GGA-5607761">
    <property type="pathway name" value="Dectin-1 mediated noncanonical NF-kB signaling"/>
</dbReference>
<dbReference type="Reactome" id="R-GGA-5607764">
    <property type="pathway name" value="CLEC7A (Dectin-1) signaling"/>
</dbReference>
<dbReference type="Reactome" id="R-GGA-5610780">
    <property type="pathway name" value="Degradation of GLI1 by the proteasome"/>
</dbReference>
<dbReference type="Reactome" id="R-GGA-5610785">
    <property type="pathway name" value="GLI3 is processed to GLI3R by the proteasome"/>
</dbReference>
<dbReference type="Reactome" id="R-GGA-5676590">
    <property type="pathway name" value="NIK--&gt;noncanonical NF-kB signaling"/>
</dbReference>
<dbReference type="Reactome" id="R-GGA-5684264">
    <property type="pathway name" value="MAP3K8 (TPL2)-dependent MAPK1/3 activation"/>
</dbReference>
<dbReference type="Reactome" id="R-GGA-68949">
    <property type="pathway name" value="Orc1 removal from chromatin"/>
</dbReference>
<dbReference type="Reactome" id="R-GGA-69231">
    <property type="pathway name" value="Cyclin D associated events in G1"/>
</dbReference>
<dbReference type="Reactome" id="R-GGA-8854050">
    <property type="pathway name" value="FBXL7 down-regulates AURKA during mitotic entry and in early mitosis"/>
</dbReference>
<dbReference type="Reactome" id="R-GGA-8939902">
    <property type="pathway name" value="Regulation of RUNX2 expression and activity"/>
</dbReference>
<dbReference type="Reactome" id="R-GGA-8951664">
    <property type="pathway name" value="Neddylation"/>
</dbReference>
<dbReference type="Reactome" id="R-GGA-9020702">
    <property type="pathway name" value="Interleukin-1 signaling"/>
</dbReference>
<dbReference type="Reactome" id="R-GGA-917937">
    <property type="pathway name" value="Iron uptake and transport"/>
</dbReference>
<dbReference type="Reactome" id="R-GGA-9708530">
    <property type="pathway name" value="Regulation of BACH1 activity"/>
</dbReference>
<dbReference type="Reactome" id="R-GGA-9762114">
    <property type="pathway name" value="GSK3B and BTRC:CUL1-mediated-degradation of NFE2L2"/>
</dbReference>
<dbReference type="Reactome" id="R-GGA-983168">
    <property type="pathway name" value="Antigen processing: Ubiquitination &amp; Proteasome degradation"/>
</dbReference>
<dbReference type="UniPathway" id="UPA00143"/>
<dbReference type="PRO" id="PR:Q5ZKF5"/>
<dbReference type="Proteomes" id="UP000000539">
    <property type="component" value="Chromosome 13"/>
</dbReference>
<dbReference type="Bgee" id="ENSGALG00000006474">
    <property type="expression patterns" value="Expressed in spermatid and 13 other cell types or tissues"/>
</dbReference>
<dbReference type="GO" id="GO:0031467">
    <property type="term" value="C:Cul7-RING ubiquitin ligase complex"/>
    <property type="evidence" value="ECO:0000250"/>
    <property type="project" value="UniProtKB"/>
</dbReference>
<dbReference type="GO" id="GO:0005737">
    <property type="term" value="C:cytoplasm"/>
    <property type="evidence" value="ECO:0000318"/>
    <property type="project" value="GO_Central"/>
</dbReference>
<dbReference type="GO" id="GO:0005634">
    <property type="term" value="C:nucleus"/>
    <property type="evidence" value="ECO:0000318"/>
    <property type="project" value="GO_Central"/>
</dbReference>
<dbReference type="GO" id="GO:0019005">
    <property type="term" value="C:SCF ubiquitin ligase complex"/>
    <property type="evidence" value="ECO:0000250"/>
    <property type="project" value="UniProtKB"/>
</dbReference>
<dbReference type="GO" id="GO:0097602">
    <property type="term" value="F:cullin family protein binding"/>
    <property type="evidence" value="ECO:0000318"/>
    <property type="project" value="GO_Central"/>
</dbReference>
<dbReference type="GO" id="GO:0016567">
    <property type="term" value="P:protein ubiquitination"/>
    <property type="evidence" value="ECO:0007669"/>
    <property type="project" value="UniProtKB-UniPathway"/>
</dbReference>
<dbReference type="GO" id="GO:0031146">
    <property type="term" value="P:SCF-dependent proteasomal ubiquitin-dependent protein catabolic process"/>
    <property type="evidence" value="ECO:0000318"/>
    <property type="project" value="GO_Central"/>
</dbReference>
<dbReference type="CDD" id="cd18322">
    <property type="entry name" value="BTB_POZ_SKP1"/>
    <property type="match status" value="1"/>
</dbReference>
<dbReference type="FunFam" id="3.30.710.10:FF:000270">
    <property type="entry name" value="S-phase kinase-associated protein 1"/>
    <property type="match status" value="1"/>
</dbReference>
<dbReference type="Gene3D" id="3.30.710.10">
    <property type="entry name" value="Potassium Channel Kv1.1, Chain A"/>
    <property type="match status" value="1"/>
</dbReference>
<dbReference type="InterPro" id="IPR016897">
    <property type="entry name" value="SKP1"/>
</dbReference>
<dbReference type="InterPro" id="IPR001232">
    <property type="entry name" value="SKP1-like"/>
</dbReference>
<dbReference type="InterPro" id="IPR036296">
    <property type="entry name" value="SKP1-like_dim_sf"/>
</dbReference>
<dbReference type="InterPro" id="IPR011333">
    <property type="entry name" value="SKP1/BTB/POZ_sf"/>
</dbReference>
<dbReference type="InterPro" id="IPR016072">
    <property type="entry name" value="Skp1_comp_dimer"/>
</dbReference>
<dbReference type="InterPro" id="IPR016073">
    <property type="entry name" value="Skp1_comp_POZ"/>
</dbReference>
<dbReference type="PANTHER" id="PTHR11165">
    <property type="entry name" value="SKP1"/>
    <property type="match status" value="1"/>
</dbReference>
<dbReference type="Pfam" id="PF01466">
    <property type="entry name" value="Skp1"/>
    <property type="match status" value="1"/>
</dbReference>
<dbReference type="Pfam" id="PF03931">
    <property type="entry name" value="Skp1_POZ"/>
    <property type="match status" value="1"/>
</dbReference>
<dbReference type="PIRSF" id="PIRSF028729">
    <property type="entry name" value="E3_ubiquit_lig_SCF_Skp"/>
    <property type="match status" value="1"/>
</dbReference>
<dbReference type="SMART" id="SM00512">
    <property type="entry name" value="Skp1"/>
    <property type="match status" value="1"/>
</dbReference>
<dbReference type="SUPFAM" id="SSF54695">
    <property type="entry name" value="POZ domain"/>
    <property type="match status" value="1"/>
</dbReference>
<dbReference type="SUPFAM" id="SSF81382">
    <property type="entry name" value="Skp1 dimerisation domain-like"/>
    <property type="match status" value="1"/>
</dbReference>
<feature type="initiator methionine" description="Removed" evidence="1">
    <location>
        <position position="1"/>
    </location>
</feature>
<feature type="chain" id="PRO_0000288493" description="S-phase kinase-associated protein 1">
    <location>
        <begin position="2"/>
        <end position="163"/>
    </location>
</feature>
<feature type="region of interest" description="Disordered" evidence="4">
    <location>
        <begin position="63"/>
        <end position="83"/>
    </location>
</feature>
<feature type="region of interest" description="Interaction with the F-box domain of F-box proteins" evidence="1">
    <location>
        <begin position="104"/>
        <end position="163"/>
    </location>
</feature>
<protein>
    <recommendedName>
        <fullName>S-phase kinase-associated protein 1</fullName>
    </recommendedName>
    <alternativeName>
        <fullName>Cyclin-A/CDK2-associated protein p19</fullName>
    </alternativeName>
    <alternativeName>
        <fullName>S-phase kinase-associated protein 1A</fullName>
    </alternativeName>
    <alternativeName>
        <fullName>p19A</fullName>
    </alternativeName>
    <alternativeName>
        <fullName>p19skp1</fullName>
    </alternativeName>
</protein>
<name>SKP1_CHICK</name>
<sequence>MPSIKLQSSDGEIFEVDVEIAKQSVTIKTMLEDLGMDDEGDDDPVPLPNVNAAILKKVIQWCTHHKDDPPPPEDDENKEKRTDDIPVWDQEFLKVDQGTLFELILAANYLDIKGLLDVTCKTVANMIKGKTPEEIRKTFNIKNDFTEEEEAQVRKENQWCEEK</sequence>
<keyword id="KW-1185">Reference proteome</keyword>
<keyword id="KW-0833">Ubl conjugation pathway</keyword>